<sequence>MAIIPDKQDSTVLERKQQKLKPPSMYKVVLLNDDFTPMEFVVMVVQEYFKKDRETATQIMLKVHREGRGVCGVYTRDIASTKVEQVVTHARQAGHPLQCVMEEA</sequence>
<protein>
    <recommendedName>
        <fullName evidence="1">ATP-dependent Clp protease adapter protein ClpS</fullName>
    </recommendedName>
</protein>
<proteinExistence type="inferred from homology"/>
<dbReference type="EMBL" id="CP000151">
    <property type="protein sequence ID" value="ABB09445.1"/>
    <property type="molecule type" value="Genomic_DNA"/>
</dbReference>
<dbReference type="RefSeq" id="WP_006398529.1">
    <property type="nucleotide sequence ID" value="NZ_LDWP01000018.1"/>
</dbReference>
<dbReference type="SMR" id="Q39DM1"/>
<dbReference type="GeneID" id="98107640"/>
<dbReference type="KEGG" id="bur:Bcep18194_A5851"/>
<dbReference type="HOGENOM" id="CLU_134358_0_0_4"/>
<dbReference type="Proteomes" id="UP000002705">
    <property type="component" value="Chromosome 1"/>
</dbReference>
<dbReference type="GO" id="GO:0030163">
    <property type="term" value="P:protein catabolic process"/>
    <property type="evidence" value="ECO:0007669"/>
    <property type="project" value="InterPro"/>
</dbReference>
<dbReference type="GO" id="GO:0006508">
    <property type="term" value="P:proteolysis"/>
    <property type="evidence" value="ECO:0007669"/>
    <property type="project" value="UniProtKB-UniRule"/>
</dbReference>
<dbReference type="FunFam" id="3.30.1390.10:FF:000002">
    <property type="entry name" value="ATP-dependent Clp protease adapter protein ClpS"/>
    <property type="match status" value="1"/>
</dbReference>
<dbReference type="Gene3D" id="3.30.1390.10">
    <property type="match status" value="1"/>
</dbReference>
<dbReference type="HAMAP" id="MF_00302">
    <property type="entry name" value="ClpS"/>
    <property type="match status" value="1"/>
</dbReference>
<dbReference type="InterPro" id="IPR022935">
    <property type="entry name" value="ClpS"/>
</dbReference>
<dbReference type="InterPro" id="IPR003769">
    <property type="entry name" value="ClpS_core"/>
</dbReference>
<dbReference type="InterPro" id="IPR014719">
    <property type="entry name" value="Ribosomal_bL12_C/ClpS-like"/>
</dbReference>
<dbReference type="NCBIfam" id="NF000672">
    <property type="entry name" value="PRK00033.1-5"/>
    <property type="match status" value="1"/>
</dbReference>
<dbReference type="PANTHER" id="PTHR33473:SF19">
    <property type="entry name" value="ATP-DEPENDENT CLP PROTEASE ADAPTER PROTEIN CLPS"/>
    <property type="match status" value="1"/>
</dbReference>
<dbReference type="PANTHER" id="PTHR33473">
    <property type="entry name" value="ATP-DEPENDENT CLP PROTEASE ADAPTER PROTEIN CLPS1, CHLOROPLASTIC"/>
    <property type="match status" value="1"/>
</dbReference>
<dbReference type="Pfam" id="PF02617">
    <property type="entry name" value="ClpS"/>
    <property type="match status" value="1"/>
</dbReference>
<dbReference type="SUPFAM" id="SSF54736">
    <property type="entry name" value="ClpS-like"/>
    <property type="match status" value="1"/>
</dbReference>
<feature type="chain" id="PRO_1000022599" description="ATP-dependent Clp protease adapter protein ClpS">
    <location>
        <begin position="1"/>
        <end position="104"/>
    </location>
</feature>
<organism>
    <name type="scientific">Burkholderia lata (strain ATCC 17760 / DSM 23089 / LMG 22485 / NCIMB 9086 / R18194 / 383)</name>
    <dbReference type="NCBI Taxonomy" id="482957"/>
    <lineage>
        <taxon>Bacteria</taxon>
        <taxon>Pseudomonadati</taxon>
        <taxon>Pseudomonadota</taxon>
        <taxon>Betaproteobacteria</taxon>
        <taxon>Burkholderiales</taxon>
        <taxon>Burkholderiaceae</taxon>
        <taxon>Burkholderia</taxon>
        <taxon>Burkholderia cepacia complex</taxon>
    </lineage>
</organism>
<evidence type="ECO:0000255" key="1">
    <source>
        <dbReference type="HAMAP-Rule" id="MF_00302"/>
    </source>
</evidence>
<comment type="function">
    <text evidence="1">Involved in the modulation of the specificity of the ClpAP-mediated ATP-dependent protein degradation.</text>
</comment>
<comment type="subunit">
    <text evidence="1">Binds to the N-terminal domain of the chaperone ClpA.</text>
</comment>
<comment type="similarity">
    <text evidence="1">Belongs to the ClpS family.</text>
</comment>
<gene>
    <name evidence="1" type="primary">clpS</name>
    <name type="ordered locus">Bcep18194_A5851</name>
</gene>
<name>CLPS_BURL3</name>
<accession>Q39DM1</accession>
<reference key="1">
    <citation type="submission" date="2005-10" db="EMBL/GenBank/DDBJ databases">
        <title>Complete sequence of chromosome 1 of Burkholderia sp. 383.</title>
        <authorList>
            <consortium name="US DOE Joint Genome Institute"/>
            <person name="Copeland A."/>
            <person name="Lucas S."/>
            <person name="Lapidus A."/>
            <person name="Barry K."/>
            <person name="Detter J.C."/>
            <person name="Glavina T."/>
            <person name="Hammon N."/>
            <person name="Israni S."/>
            <person name="Pitluck S."/>
            <person name="Chain P."/>
            <person name="Malfatti S."/>
            <person name="Shin M."/>
            <person name="Vergez L."/>
            <person name="Schmutz J."/>
            <person name="Larimer F."/>
            <person name="Land M."/>
            <person name="Kyrpides N."/>
            <person name="Lykidis A."/>
            <person name="Richardson P."/>
        </authorList>
    </citation>
    <scope>NUCLEOTIDE SEQUENCE [LARGE SCALE GENOMIC DNA]</scope>
    <source>
        <strain>ATCC 17760 / DSM 23089 / LMG 22485 / NCIMB 9086 / R18194 / 383</strain>
    </source>
</reference>